<comment type="catalytic activity">
    <reaction evidence="1">
        <text>tRNA(His) + L-histidine + ATP = L-histidyl-tRNA(His) + AMP + diphosphate + H(+)</text>
        <dbReference type="Rhea" id="RHEA:17313"/>
        <dbReference type="Rhea" id="RHEA-COMP:9665"/>
        <dbReference type="Rhea" id="RHEA-COMP:9689"/>
        <dbReference type="ChEBI" id="CHEBI:15378"/>
        <dbReference type="ChEBI" id="CHEBI:30616"/>
        <dbReference type="ChEBI" id="CHEBI:33019"/>
        <dbReference type="ChEBI" id="CHEBI:57595"/>
        <dbReference type="ChEBI" id="CHEBI:78442"/>
        <dbReference type="ChEBI" id="CHEBI:78527"/>
        <dbReference type="ChEBI" id="CHEBI:456215"/>
        <dbReference type="EC" id="6.1.1.21"/>
    </reaction>
</comment>
<comment type="subunit">
    <text evidence="1">Homodimer.</text>
</comment>
<comment type="subcellular location">
    <subcellularLocation>
        <location evidence="1">Cytoplasm</location>
    </subcellularLocation>
</comment>
<comment type="similarity">
    <text evidence="1">Belongs to the class-II aminoacyl-tRNA synthetase family.</text>
</comment>
<protein>
    <recommendedName>
        <fullName evidence="1">Histidine--tRNA ligase</fullName>
        <ecNumber evidence="1">6.1.1.21</ecNumber>
    </recommendedName>
    <alternativeName>
        <fullName evidence="1">Histidyl-tRNA synthetase</fullName>
        <shortName evidence="1">HisRS</shortName>
    </alternativeName>
</protein>
<evidence type="ECO:0000255" key="1">
    <source>
        <dbReference type="HAMAP-Rule" id="MF_00127"/>
    </source>
</evidence>
<organism>
    <name type="scientific">Gloeobacter violaceus (strain ATCC 29082 / PCC 7421)</name>
    <dbReference type="NCBI Taxonomy" id="251221"/>
    <lineage>
        <taxon>Bacteria</taxon>
        <taxon>Bacillati</taxon>
        <taxon>Cyanobacteriota</taxon>
        <taxon>Cyanophyceae</taxon>
        <taxon>Gloeobacterales</taxon>
        <taxon>Gloeobacteraceae</taxon>
        <taxon>Gloeobacter</taxon>
    </lineage>
</organism>
<accession>Q7NHH9</accession>
<reference key="1">
    <citation type="journal article" date="2003" name="DNA Res.">
        <title>Complete genome structure of Gloeobacter violaceus PCC 7421, a cyanobacterium that lacks thylakoids.</title>
        <authorList>
            <person name="Nakamura Y."/>
            <person name="Kaneko T."/>
            <person name="Sato S."/>
            <person name="Mimuro M."/>
            <person name="Miyashita H."/>
            <person name="Tsuchiya T."/>
            <person name="Sasamoto S."/>
            <person name="Watanabe A."/>
            <person name="Kawashima K."/>
            <person name="Kishida Y."/>
            <person name="Kiyokawa C."/>
            <person name="Kohara M."/>
            <person name="Matsumoto M."/>
            <person name="Matsuno A."/>
            <person name="Nakazaki N."/>
            <person name="Shimpo S."/>
            <person name="Takeuchi C."/>
            <person name="Yamada M."/>
            <person name="Tabata S."/>
        </authorList>
    </citation>
    <scope>NUCLEOTIDE SEQUENCE [LARGE SCALE GENOMIC DNA]</scope>
    <source>
        <strain>ATCC 29082 / PCC 7421</strain>
    </source>
</reference>
<name>SYH_GLOVI</name>
<gene>
    <name evidence="1" type="primary">hisS</name>
    <name type="ordered locus">gll2557</name>
</gene>
<dbReference type="EC" id="6.1.1.21" evidence="1"/>
<dbReference type="EMBL" id="BA000045">
    <property type="protein sequence ID" value="BAC90498.1"/>
    <property type="molecule type" value="Genomic_DNA"/>
</dbReference>
<dbReference type="RefSeq" id="NP_925503.1">
    <property type="nucleotide sequence ID" value="NC_005125.1"/>
</dbReference>
<dbReference type="RefSeq" id="WP_011142552.1">
    <property type="nucleotide sequence ID" value="NC_005125.1"/>
</dbReference>
<dbReference type="SMR" id="Q7NHH9"/>
<dbReference type="FunCoup" id="Q7NHH9">
    <property type="interactions" value="363"/>
</dbReference>
<dbReference type="STRING" id="251221.gene:10760057"/>
<dbReference type="EnsemblBacteria" id="BAC90498">
    <property type="protein sequence ID" value="BAC90498"/>
    <property type="gene ID" value="BAC90498"/>
</dbReference>
<dbReference type="KEGG" id="gvi:gll2557"/>
<dbReference type="PATRIC" id="fig|251221.4.peg.2595"/>
<dbReference type="eggNOG" id="COG0124">
    <property type="taxonomic scope" value="Bacteria"/>
</dbReference>
<dbReference type="HOGENOM" id="CLU_025113_3_0_3"/>
<dbReference type="InParanoid" id="Q7NHH9"/>
<dbReference type="OrthoDB" id="9800814at2"/>
<dbReference type="PhylomeDB" id="Q7NHH9"/>
<dbReference type="Proteomes" id="UP000000557">
    <property type="component" value="Chromosome"/>
</dbReference>
<dbReference type="GO" id="GO:0005737">
    <property type="term" value="C:cytoplasm"/>
    <property type="evidence" value="ECO:0007669"/>
    <property type="project" value="UniProtKB-SubCell"/>
</dbReference>
<dbReference type="GO" id="GO:0005524">
    <property type="term" value="F:ATP binding"/>
    <property type="evidence" value="ECO:0007669"/>
    <property type="project" value="UniProtKB-UniRule"/>
</dbReference>
<dbReference type="GO" id="GO:0004821">
    <property type="term" value="F:histidine-tRNA ligase activity"/>
    <property type="evidence" value="ECO:0007669"/>
    <property type="project" value="UniProtKB-UniRule"/>
</dbReference>
<dbReference type="GO" id="GO:0006427">
    <property type="term" value="P:histidyl-tRNA aminoacylation"/>
    <property type="evidence" value="ECO:0007669"/>
    <property type="project" value="UniProtKB-UniRule"/>
</dbReference>
<dbReference type="CDD" id="cd00773">
    <property type="entry name" value="HisRS-like_core"/>
    <property type="match status" value="1"/>
</dbReference>
<dbReference type="FunFam" id="3.30.930.10:FF:000093">
    <property type="entry name" value="Histidine--tRNA ligase"/>
    <property type="match status" value="1"/>
</dbReference>
<dbReference type="Gene3D" id="3.40.50.800">
    <property type="entry name" value="Anticodon-binding domain"/>
    <property type="match status" value="1"/>
</dbReference>
<dbReference type="Gene3D" id="3.30.930.10">
    <property type="entry name" value="Bira Bifunctional Protein, Domain 2"/>
    <property type="match status" value="1"/>
</dbReference>
<dbReference type="HAMAP" id="MF_00127">
    <property type="entry name" value="His_tRNA_synth"/>
    <property type="match status" value="1"/>
</dbReference>
<dbReference type="InterPro" id="IPR006195">
    <property type="entry name" value="aa-tRNA-synth_II"/>
</dbReference>
<dbReference type="InterPro" id="IPR045864">
    <property type="entry name" value="aa-tRNA-synth_II/BPL/LPL"/>
</dbReference>
<dbReference type="InterPro" id="IPR004154">
    <property type="entry name" value="Anticodon-bd"/>
</dbReference>
<dbReference type="InterPro" id="IPR036621">
    <property type="entry name" value="Anticodon-bd_dom_sf"/>
</dbReference>
<dbReference type="InterPro" id="IPR015807">
    <property type="entry name" value="His-tRNA-ligase"/>
</dbReference>
<dbReference type="InterPro" id="IPR041715">
    <property type="entry name" value="HisRS-like_core"/>
</dbReference>
<dbReference type="InterPro" id="IPR004516">
    <property type="entry name" value="HisRS/HisZ"/>
</dbReference>
<dbReference type="NCBIfam" id="TIGR00442">
    <property type="entry name" value="hisS"/>
    <property type="match status" value="1"/>
</dbReference>
<dbReference type="PANTHER" id="PTHR11476:SF7">
    <property type="entry name" value="HISTIDINE--TRNA LIGASE"/>
    <property type="match status" value="1"/>
</dbReference>
<dbReference type="PANTHER" id="PTHR11476">
    <property type="entry name" value="HISTIDYL-TRNA SYNTHETASE"/>
    <property type="match status" value="1"/>
</dbReference>
<dbReference type="Pfam" id="PF03129">
    <property type="entry name" value="HGTP_anticodon"/>
    <property type="match status" value="1"/>
</dbReference>
<dbReference type="Pfam" id="PF13393">
    <property type="entry name" value="tRNA-synt_His"/>
    <property type="match status" value="1"/>
</dbReference>
<dbReference type="PIRSF" id="PIRSF001549">
    <property type="entry name" value="His-tRNA_synth"/>
    <property type="match status" value="1"/>
</dbReference>
<dbReference type="SUPFAM" id="SSF52954">
    <property type="entry name" value="Class II aaRS ABD-related"/>
    <property type="match status" value="1"/>
</dbReference>
<dbReference type="SUPFAM" id="SSF55681">
    <property type="entry name" value="Class II aaRS and biotin synthetases"/>
    <property type="match status" value="1"/>
</dbReference>
<dbReference type="PROSITE" id="PS50862">
    <property type="entry name" value="AA_TRNA_LIGASE_II"/>
    <property type="match status" value="1"/>
</dbReference>
<proteinExistence type="inferred from homology"/>
<keyword id="KW-0030">Aminoacyl-tRNA synthetase</keyword>
<keyword id="KW-0067">ATP-binding</keyword>
<keyword id="KW-0963">Cytoplasm</keyword>
<keyword id="KW-0436">Ligase</keyword>
<keyword id="KW-0547">Nucleotide-binding</keyword>
<keyword id="KW-0648">Protein biosynthesis</keyword>
<keyword id="KW-1185">Reference proteome</keyword>
<feature type="chain" id="PRO_0000136168" description="Histidine--tRNA ligase">
    <location>
        <begin position="1"/>
        <end position="467"/>
    </location>
</feature>
<sequence>MGELGTMGGTRDFLPDEMIRREYVIDTLKTIFRKYGFEPLETPAIERWETLAGKYGEEGEKLIYHVVSSGSLGTLKAGERTEHALRYDLTVPLARVVGMYGDQMVADPADPKKQTRRLPRPFKRYQIQPVWRGDRPGEGRYREFHQCDADVVGSTSPLVETELIALTVEAFKALGFADFTVKINHRQLLKGLIEQAGIAPTKEATVLTSIDKLDKLPPEKVRLELAGKGLNADQLDALFQVIALEGTSEQVLEGARSLLAGSEAAQRGIGELTKLLHYLEALGVDSAYYRIDLALARGLDYYTGTIFETVSAAKVGSVGAGGRYDRLIYDLSGGKADLPACGTSFGLDRILAAMDQLGLFASLRRAGEVLVLHFGDPGVSQVCFELVRGLREAGVRAELGYHEEPFTPNGMRQQLGYANEKGFAYAVIVGPDEMAQGQAALRDLTTRRQEKIPLATAGQLIAGRLRS</sequence>